<sequence length="72" mass="8173">MSKEEAIEVEGTVIEPLPNAMFRVELENGHVVLAHISGKMRKYFIKILPGDKVTVELSPYDLSRGRITYRAK</sequence>
<comment type="function">
    <text evidence="1">One of the essential components for the initiation of protein synthesis. Stabilizes the binding of IF-2 and IF-3 on the 30S subunit to which N-formylmethionyl-tRNA(fMet) subsequently binds. Helps modulate mRNA selection, yielding the 30S pre-initiation complex (PIC). Upon addition of the 50S ribosomal subunit IF-1, IF-2 and IF-3 are released leaving the mature 70S translation initiation complex.</text>
</comment>
<comment type="subunit">
    <text evidence="1">Component of the 30S ribosomal translation pre-initiation complex which assembles on the 30S ribosome in the order IF-2 and IF-3, IF-1 and N-formylmethionyl-tRNA(fMet); mRNA recruitment can occur at any time during PIC assembly.</text>
</comment>
<comment type="subcellular location">
    <subcellularLocation>
        <location evidence="1">Cytoplasm</location>
    </subcellularLocation>
</comment>
<comment type="similarity">
    <text evidence="1">Belongs to the IF-1 family.</text>
</comment>
<accession>Q39UK8</accession>
<keyword id="KW-0963">Cytoplasm</keyword>
<keyword id="KW-0396">Initiation factor</keyword>
<keyword id="KW-0648">Protein biosynthesis</keyword>
<keyword id="KW-1185">Reference proteome</keyword>
<keyword id="KW-0694">RNA-binding</keyword>
<keyword id="KW-0699">rRNA-binding</keyword>
<proteinExistence type="inferred from homology"/>
<feature type="chain" id="PRO_0000263805" description="Translation initiation factor IF-1">
    <location>
        <begin position="1"/>
        <end position="72"/>
    </location>
</feature>
<feature type="domain" description="S1-like" evidence="1">
    <location>
        <begin position="1"/>
        <end position="72"/>
    </location>
</feature>
<organism>
    <name type="scientific">Geobacter metallireducens (strain ATCC 53774 / DSM 7210 / GS-15)</name>
    <dbReference type="NCBI Taxonomy" id="269799"/>
    <lineage>
        <taxon>Bacteria</taxon>
        <taxon>Pseudomonadati</taxon>
        <taxon>Thermodesulfobacteriota</taxon>
        <taxon>Desulfuromonadia</taxon>
        <taxon>Geobacterales</taxon>
        <taxon>Geobacteraceae</taxon>
        <taxon>Geobacter</taxon>
    </lineage>
</organism>
<dbReference type="EMBL" id="CP000148">
    <property type="protein sequence ID" value="ABB32066.1"/>
    <property type="molecule type" value="Genomic_DNA"/>
</dbReference>
<dbReference type="RefSeq" id="WP_004512009.1">
    <property type="nucleotide sequence ID" value="NC_007517.1"/>
</dbReference>
<dbReference type="SMR" id="Q39UK8"/>
<dbReference type="STRING" id="269799.Gmet_1837"/>
<dbReference type="KEGG" id="gme:Gmet_1837"/>
<dbReference type="eggNOG" id="COG0361">
    <property type="taxonomic scope" value="Bacteria"/>
</dbReference>
<dbReference type="HOGENOM" id="CLU_151267_1_0_7"/>
<dbReference type="Proteomes" id="UP000007073">
    <property type="component" value="Chromosome"/>
</dbReference>
<dbReference type="GO" id="GO:0005829">
    <property type="term" value="C:cytosol"/>
    <property type="evidence" value="ECO:0007669"/>
    <property type="project" value="TreeGrafter"/>
</dbReference>
<dbReference type="GO" id="GO:0043022">
    <property type="term" value="F:ribosome binding"/>
    <property type="evidence" value="ECO:0007669"/>
    <property type="project" value="UniProtKB-UniRule"/>
</dbReference>
<dbReference type="GO" id="GO:0019843">
    <property type="term" value="F:rRNA binding"/>
    <property type="evidence" value="ECO:0007669"/>
    <property type="project" value="UniProtKB-UniRule"/>
</dbReference>
<dbReference type="GO" id="GO:0003743">
    <property type="term" value="F:translation initiation factor activity"/>
    <property type="evidence" value="ECO:0007669"/>
    <property type="project" value="UniProtKB-UniRule"/>
</dbReference>
<dbReference type="CDD" id="cd04451">
    <property type="entry name" value="S1_IF1"/>
    <property type="match status" value="1"/>
</dbReference>
<dbReference type="FunFam" id="2.40.50.140:FF:000002">
    <property type="entry name" value="Translation initiation factor IF-1"/>
    <property type="match status" value="1"/>
</dbReference>
<dbReference type="Gene3D" id="2.40.50.140">
    <property type="entry name" value="Nucleic acid-binding proteins"/>
    <property type="match status" value="1"/>
</dbReference>
<dbReference type="HAMAP" id="MF_00075">
    <property type="entry name" value="IF_1"/>
    <property type="match status" value="1"/>
</dbReference>
<dbReference type="InterPro" id="IPR012340">
    <property type="entry name" value="NA-bd_OB-fold"/>
</dbReference>
<dbReference type="InterPro" id="IPR006196">
    <property type="entry name" value="RNA-binding_domain_S1_IF1"/>
</dbReference>
<dbReference type="InterPro" id="IPR003029">
    <property type="entry name" value="S1_domain"/>
</dbReference>
<dbReference type="InterPro" id="IPR004368">
    <property type="entry name" value="TIF_IF1"/>
</dbReference>
<dbReference type="NCBIfam" id="TIGR00008">
    <property type="entry name" value="infA"/>
    <property type="match status" value="1"/>
</dbReference>
<dbReference type="PANTHER" id="PTHR33370">
    <property type="entry name" value="TRANSLATION INITIATION FACTOR IF-1, CHLOROPLASTIC"/>
    <property type="match status" value="1"/>
</dbReference>
<dbReference type="PANTHER" id="PTHR33370:SF1">
    <property type="entry name" value="TRANSLATION INITIATION FACTOR IF-1, CHLOROPLASTIC"/>
    <property type="match status" value="1"/>
</dbReference>
<dbReference type="Pfam" id="PF01176">
    <property type="entry name" value="eIF-1a"/>
    <property type="match status" value="1"/>
</dbReference>
<dbReference type="SMART" id="SM00316">
    <property type="entry name" value="S1"/>
    <property type="match status" value="1"/>
</dbReference>
<dbReference type="SUPFAM" id="SSF50249">
    <property type="entry name" value="Nucleic acid-binding proteins"/>
    <property type="match status" value="1"/>
</dbReference>
<dbReference type="PROSITE" id="PS50832">
    <property type="entry name" value="S1_IF1_TYPE"/>
    <property type="match status" value="1"/>
</dbReference>
<name>IF1_GEOMG</name>
<reference key="1">
    <citation type="journal article" date="2009" name="BMC Microbiol.">
        <title>The genome sequence of Geobacter metallireducens: features of metabolism, physiology and regulation common and dissimilar to Geobacter sulfurreducens.</title>
        <authorList>
            <person name="Aklujkar M."/>
            <person name="Krushkal J."/>
            <person name="DiBartolo G."/>
            <person name="Lapidus A."/>
            <person name="Land M.L."/>
            <person name="Lovley D.R."/>
        </authorList>
    </citation>
    <scope>NUCLEOTIDE SEQUENCE [LARGE SCALE GENOMIC DNA]</scope>
    <source>
        <strain>ATCC 53774 / DSM 7210 / GS-15</strain>
    </source>
</reference>
<gene>
    <name evidence="1" type="primary">infA</name>
    <name type="ordered locus">Gmet_1837</name>
</gene>
<protein>
    <recommendedName>
        <fullName evidence="1">Translation initiation factor IF-1</fullName>
    </recommendedName>
</protein>
<evidence type="ECO:0000255" key="1">
    <source>
        <dbReference type="HAMAP-Rule" id="MF_00075"/>
    </source>
</evidence>